<reference key="1">
    <citation type="submission" date="2007-06" db="EMBL/GenBank/DDBJ databases">
        <title>Complete sequence of chromosome of Staphylococcus aureus subsp. aureus JH1.</title>
        <authorList>
            <consortium name="US DOE Joint Genome Institute"/>
            <person name="Copeland A."/>
            <person name="Lucas S."/>
            <person name="Lapidus A."/>
            <person name="Barry K."/>
            <person name="Detter J.C."/>
            <person name="Glavina del Rio T."/>
            <person name="Hammon N."/>
            <person name="Israni S."/>
            <person name="Dalin E."/>
            <person name="Tice H."/>
            <person name="Pitluck S."/>
            <person name="Chain P."/>
            <person name="Malfatti S."/>
            <person name="Shin M."/>
            <person name="Vergez L."/>
            <person name="Schmutz J."/>
            <person name="Larimer F."/>
            <person name="Land M."/>
            <person name="Hauser L."/>
            <person name="Kyrpides N."/>
            <person name="Ivanova N."/>
            <person name="Tomasz A."/>
            <person name="Richardson P."/>
        </authorList>
    </citation>
    <scope>NUCLEOTIDE SEQUENCE [LARGE SCALE GENOMIC DNA]</scope>
    <source>
        <strain>JH1</strain>
    </source>
</reference>
<accession>A6U2L4</accession>
<feature type="chain" id="PRO_1000136362" description="tRNA (guanine-N(7)-)-methyltransferase">
    <location>
        <begin position="1"/>
        <end position="214"/>
    </location>
</feature>
<feature type="active site" evidence="1">
    <location>
        <position position="117"/>
    </location>
</feature>
<feature type="binding site" evidence="2">
    <location>
        <position position="43"/>
    </location>
    <ligand>
        <name>S-adenosyl-L-methionine</name>
        <dbReference type="ChEBI" id="CHEBI:59789"/>
    </ligand>
</feature>
<feature type="binding site" evidence="2">
    <location>
        <position position="68"/>
    </location>
    <ligand>
        <name>S-adenosyl-L-methionine</name>
        <dbReference type="ChEBI" id="CHEBI:59789"/>
    </ligand>
</feature>
<feature type="binding site" evidence="2">
    <location>
        <position position="95"/>
    </location>
    <ligand>
        <name>S-adenosyl-L-methionine</name>
        <dbReference type="ChEBI" id="CHEBI:59789"/>
    </ligand>
</feature>
<feature type="binding site" evidence="2">
    <location>
        <position position="117"/>
    </location>
    <ligand>
        <name>S-adenosyl-L-methionine</name>
        <dbReference type="ChEBI" id="CHEBI:59789"/>
    </ligand>
</feature>
<feature type="binding site" evidence="2">
    <location>
        <position position="121"/>
    </location>
    <ligand>
        <name>substrate</name>
    </ligand>
</feature>
<feature type="binding site" evidence="2">
    <location>
        <position position="153"/>
    </location>
    <ligand>
        <name>substrate</name>
    </ligand>
</feature>
<feature type="binding site" evidence="2">
    <location>
        <begin position="190"/>
        <end position="193"/>
    </location>
    <ligand>
        <name>substrate</name>
    </ligand>
</feature>
<comment type="function">
    <text evidence="2">Catalyzes the formation of N(7)-methylguanine at position 46 (m7G46) in tRNA.</text>
</comment>
<comment type="catalytic activity">
    <reaction evidence="2">
        <text>guanosine(46) in tRNA + S-adenosyl-L-methionine = N(7)-methylguanosine(46) in tRNA + S-adenosyl-L-homocysteine</text>
        <dbReference type="Rhea" id="RHEA:42708"/>
        <dbReference type="Rhea" id="RHEA-COMP:10188"/>
        <dbReference type="Rhea" id="RHEA-COMP:10189"/>
        <dbReference type="ChEBI" id="CHEBI:57856"/>
        <dbReference type="ChEBI" id="CHEBI:59789"/>
        <dbReference type="ChEBI" id="CHEBI:74269"/>
        <dbReference type="ChEBI" id="CHEBI:74480"/>
        <dbReference type="EC" id="2.1.1.33"/>
    </reaction>
</comment>
<comment type="pathway">
    <text evidence="2">tRNA modification; N(7)-methylguanine-tRNA biosynthesis.</text>
</comment>
<comment type="similarity">
    <text evidence="2">Belongs to the class I-like SAM-binding methyltransferase superfamily. TrmB family.</text>
</comment>
<proteinExistence type="inferred from homology"/>
<keyword id="KW-0489">Methyltransferase</keyword>
<keyword id="KW-0949">S-adenosyl-L-methionine</keyword>
<keyword id="KW-0808">Transferase</keyword>
<keyword id="KW-0819">tRNA processing</keyword>
<protein>
    <recommendedName>
        <fullName evidence="2">tRNA (guanine-N(7)-)-methyltransferase</fullName>
        <ecNumber evidence="2">2.1.1.33</ecNumber>
    </recommendedName>
    <alternativeName>
        <fullName evidence="2">tRNA (guanine(46)-N(7))-methyltransferase</fullName>
    </alternativeName>
    <alternativeName>
        <fullName evidence="2">tRNA(m7G46)-methyltransferase</fullName>
    </alternativeName>
</protein>
<dbReference type="EC" id="2.1.1.33" evidence="2"/>
<dbReference type="EMBL" id="CP000736">
    <property type="protein sequence ID" value="ABR52682.1"/>
    <property type="molecule type" value="Genomic_DNA"/>
</dbReference>
<dbReference type="SMR" id="A6U2L4"/>
<dbReference type="KEGG" id="sah:SaurJH1_1838"/>
<dbReference type="HOGENOM" id="CLU_050910_2_1_9"/>
<dbReference type="UniPathway" id="UPA00989"/>
<dbReference type="GO" id="GO:0043527">
    <property type="term" value="C:tRNA methyltransferase complex"/>
    <property type="evidence" value="ECO:0007669"/>
    <property type="project" value="TreeGrafter"/>
</dbReference>
<dbReference type="GO" id="GO:0008176">
    <property type="term" value="F:tRNA (guanine(46)-N7)-methyltransferase activity"/>
    <property type="evidence" value="ECO:0007669"/>
    <property type="project" value="UniProtKB-UniRule"/>
</dbReference>
<dbReference type="CDD" id="cd02440">
    <property type="entry name" value="AdoMet_MTases"/>
    <property type="match status" value="1"/>
</dbReference>
<dbReference type="FunFam" id="3.40.50.150:FF:000035">
    <property type="entry name" value="tRNA (guanine-N(7)-)-methyltransferase"/>
    <property type="match status" value="1"/>
</dbReference>
<dbReference type="Gene3D" id="3.40.50.150">
    <property type="entry name" value="Vaccinia Virus protein VP39"/>
    <property type="match status" value="1"/>
</dbReference>
<dbReference type="HAMAP" id="MF_01057">
    <property type="entry name" value="tRNA_methyltr_TrmB"/>
    <property type="match status" value="1"/>
</dbReference>
<dbReference type="InterPro" id="IPR029063">
    <property type="entry name" value="SAM-dependent_MTases_sf"/>
</dbReference>
<dbReference type="InterPro" id="IPR003358">
    <property type="entry name" value="tRNA_(Gua-N-7)_MeTrfase_Trmb"/>
</dbReference>
<dbReference type="InterPro" id="IPR055361">
    <property type="entry name" value="tRNA_methyltr_TrmB_bact"/>
</dbReference>
<dbReference type="NCBIfam" id="NF001080">
    <property type="entry name" value="PRK00121.2-2"/>
    <property type="match status" value="1"/>
</dbReference>
<dbReference type="NCBIfam" id="TIGR00091">
    <property type="entry name" value="tRNA (guanosine(46)-N7)-methyltransferase TrmB"/>
    <property type="match status" value="1"/>
</dbReference>
<dbReference type="PANTHER" id="PTHR23417">
    <property type="entry name" value="3-DEOXY-D-MANNO-OCTULOSONIC-ACID TRANSFERASE/TRNA GUANINE-N 7 - -METHYLTRANSFERASE"/>
    <property type="match status" value="1"/>
</dbReference>
<dbReference type="PANTHER" id="PTHR23417:SF14">
    <property type="entry name" value="PENTACOTRIPEPTIDE-REPEAT REGION OF PRORP DOMAIN-CONTAINING PROTEIN"/>
    <property type="match status" value="1"/>
</dbReference>
<dbReference type="Pfam" id="PF02390">
    <property type="entry name" value="Methyltransf_4"/>
    <property type="match status" value="1"/>
</dbReference>
<dbReference type="SUPFAM" id="SSF53335">
    <property type="entry name" value="S-adenosyl-L-methionine-dependent methyltransferases"/>
    <property type="match status" value="1"/>
</dbReference>
<dbReference type="PROSITE" id="PS51625">
    <property type="entry name" value="SAM_MT_TRMB"/>
    <property type="match status" value="1"/>
</dbReference>
<evidence type="ECO:0000250" key="1"/>
<evidence type="ECO:0000255" key="2">
    <source>
        <dbReference type="HAMAP-Rule" id="MF_01057"/>
    </source>
</evidence>
<gene>
    <name evidence="2" type="primary">trmB</name>
    <name type="ordered locus">SaurJH1_1838</name>
</gene>
<name>TRMB_STAA2</name>
<sequence>MRVRYKPWAEDYLKDHPELVDMEGQHAGKMTEWFDKTQPIHIEIGSGMGQFITTLAAQNPHINYISMEREKSIVYKVLDKVKEMGLTNLKIICNDAIELNEYFKDGEVSRIYLNFSDPWPKNRHAKRRLTYHTFLALYQQILNDEGDLHFKTDNRGLFAYSLESMSQFGMYFTKINLNLHQEDDGSNILTEYEKKFSDKGSRIYRMEAKFHSQK</sequence>
<organism>
    <name type="scientific">Staphylococcus aureus (strain JH1)</name>
    <dbReference type="NCBI Taxonomy" id="359787"/>
    <lineage>
        <taxon>Bacteria</taxon>
        <taxon>Bacillati</taxon>
        <taxon>Bacillota</taxon>
        <taxon>Bacilli</taxon>
        <taxon>Bacillales</taxon>
        <taxon>Staphylococcaceae</taxon>
        <taxon>Staphylococcus</taxon>
    </lineage>
</organism>